<sequence>SKYESEGVARSEELQEVHQAFADAGRKPI</sequence>
<dbReference type="InParanoid" id="P82210"/>
<dbReference type="Proteomes" id="UP000005204">
    <property type="component" value="Unassembled WGS sequence"/>
</dbReference>
<dbReference type="GO" id="GO:0030016">
    <property type="term" value="C:myofibril"/>
    <property type="evidence" value="ECO:0007669"/>
    <property type="project" value="UniProtKB-SubCell"/>
</dbReference>
<dbReference type="GO" id="GO:0016459">
    <property type="term" value="C:myosin complex"/>
    <property type="evidence" value="ECO:0007669"/>
    <property type="project" value="UniProtKB-KW"/>
</dbReference>
<dbReference type="GO" id="GO:0032982">
    <property type="term" value="C:myosin filament"/>
    <property type="evidence" value="ECO:0007669"/>
    <property type="project" value="UniProtKB-KW"/>
</dbReference>
<dbReference type="GO" id="GO:0003779">
    <property type="term" value="F:actin binding"/>
    <property type="evidence" value="ECO:0007669"/>
    <property type="project" value="UniProtKB-KW"/>
</dbReference>
<dbReference type="GO" id="GO:0005524">
    <property type="term" value="F:ATP binding"/>
    <property type="evidence" value="ECO:0007669"/>
    <property type="project" value="UniProtKB-KW"/>
</dbReference>
<dbReference type="GO" id="GO:0005516">
    <property type="term" value="F:calmodulin binding"/>
    <property type="evidence" value="ECO:0007669"/>
    <property type="project" value="UniProtKB-KW"/>
</dbReference>
<keyword id="KW-0009">Actin-binding</keyword>
<keyword id="KW-0067">ATP-binding</keyword>
<keyword id="KW-0112">Calmodulin-binding</keyword>
<keyword id="KW-0963">Cytoplasm</keyword>
<keyword id="KW-0903">Direct protein sequencing</keyword>
<keyword id="KW-0505">Motor protein</keyword>
<keyword id="KW-0514">Muscle protein</keyword>
<keyword id="KW-0518">Myosin</keyword>
<keyword id="KW-0547">Nucleotide-binding</keyword>
<keyword id="KW-1185">Reference proteome</keyword>
<keyword id="KW-0787">Thick filament</keyword>
<evidence type="ECO:0000256" key="1">
    <source>
        <dbReference type="SAM" id="MobiDB-lite"/>
    </source>
</evidence>
<evidence type="ECO:0000269" key="2">
    <source>
    </source>
</evidence>
<evidence type="ECO:0000303" key="3">
    <source>
    </source>
</evidence>
<evidence type="ECO:0000305" key="4"/>
<protein>
    <recommendedName>
        <fullName>Myosin heavy chain, muscle</fullName>
    </recommendedName>
</protein>
<name>MYS_BOMMO</name>
<comment type="function">
    <text evidence="4">Muscle contraction.</text>
</comment>
<comment type="subunit">
    <text evidence="4">Muscle myosin is a hexameric protein that consists of 2 heavy chain subunits (MHC), 2 alkali light chain subunits (MLC) and 2 regulatory light chain subunits (MLC-2).</text>
</comment>
<comment type="subcellular location">
    <subcellularLocation>
        <location>Cytoplasm</location>
        <location>Myofibril</location>
    </subcellularLocation>
    <text evidence="4">Thick filaments of the myofibrils.</text>
</comment>
<comment type="domain">
    <text evidence="4">Limited proteolysis of myosin heavy chain produces 1 light meromyosin (LMM) and 1 heavy meromyosin (HMM). HMM can be further cleaved into 2 globular subfragments (S1) and 1 rod-shaped subfragment (S2).</text>
</comment>
<organism>
    <name type="scientific">Bombyx mori</name>
    <name type="common">Silk moth</name>
    <dbReference type="NCBI Taxonomy" id="7091"/>
    <lineage>
        <taxon>Eukaryota</taxon>
        <taxon>Metazoa</taxon>
        <taxon>Ecdysozoa</taxon>
        <taxon>Arthropoda</taxon>
        <taxon>Hexapoda</taxon>
        <taxon>Insecta</taxon>
        <taxon>Pterygota</taxon>
        <taxon>Neoptera</taxon>
        <taxon>Endopterygota</taxon>
        <taxon>Lepidoptera</taxon>
        <taxon>Glossata</taxon>
        <taxon>Ditrysia</taxon>
        <taxon>Bombycoidea</taxon>
        <taxon>Bombycidae</taxon>
        <taxon>Bombycinae</taxon>
        <taxon>Bombyx</taxon>
    </lineage>
</organism>
<proteinExistence type="evidence at protein level"/>
<accession>P82210</accession>
<accession>P82209</accession>
<accession>P82211</accession>
<feature type="chain" id="PRO_0000274555" description="Myosin heavy chain, muscle">
    <location>
        <begin position="1"/>
        <end position="29" status="greater than"/>
    </location>
</feature>
<feature type="region of interest" description="Disordered" evidence="1">
    <location>
        <begin position="1"/>
        <end position="29"/>
    </location>
</feature>
<feature type="compositionally biased region" description="Basic and acidic residues" evidence="1">
    <location>
        <begin position="1"/>
        <end position="16"/>
    </location>
</feature>
<feature type="unsure residue" description="Q or P" evidence="2">
    <location>
        <position position="15"/>
    </location>
</feature>
<feature type="unsure residue" description="R or Q" evidence="2">
    <location>
        <position position="26"/>
    </location>
</feature>
<feature type="unsure residue" description="I or G" evidence="2">
    <location>
        <position position="29"/>
    </location>
</feature>
<feature type="non-terminal residue" evidence="3">
    <location>
        <position position="29"/>
    </location>
</feature>
<reference evidence="4" key="1">
    <citation type="journal article" date="2001" name="Yi Chuan Xue Bao">
        <title>Protein database for several tissues derived from five instar of silkworm.</title>
        <authorList>
            <person name="Zhong B.-X."/>
        </authorList>
    </citation>
    <scope>PROTEIN SEQUENCE</scope>
    <source>
        <strain evidence="2">Xinhang X Keming</strain>
        <tissue evidence="2">Body wall</tissue>
        <tissue evidence="2">Fat body</tissue>
    </source>
</reference>